<proteinExistence type="evidence at protein level"/>
<dbReference type="EMBL" id="AE002098">
    <property type="protein sequence ID" value="AAF41120.1"/>
    <property type="molecule type" value="Genomic_DNA"/>
</dbReference>
<dbReference type="PIR" id="H81167">
    <property type="entry name" value="H81167"/>
</dbReference>
<dbReference type="RefSeq" id="NP_273745.1">
    <property type="nucleotide sequence ID" value="NC_003112.2"/>
</dbReference>
<dbReference type="RefSeq" id="WP_002244053.1">
    <property type="nucleotide sequence ID" value="NC_003112.2"/>
</dbReference>
<dbReference type="SMR" id="Q9K0B1"/>
<dbReference type="FunCoup" id="Q9K0B1">
    <property type="interactions" value="87"/>
</dbReference>
<dbReference type="STRING" id="122586.NMB0703"/>
<dbReference type="PaxDb" id="122586-NMB0703"/>
<dbReference type="KEGG" id="nme:NMB0703"/>
<dbReference type="PATRIC" id="fig|122586.8.peg.895"/>
<dbReference type="HOGENOM" id="CLU_065982_0_1_4"/>
<dbReference type="InParanoid" id="Q9K0B1"/>
<dbReference type="OrthoDB" id="9779191at2"/>
<dbReference type="Proteomes" id="UP000000425">
    <property type="component" value="Chromosome"/>
</dbReference>
<dbReference type="GO" id="GO:1990063">
    <property type="term" value="C:Bam protein complex"/>
    <property type="evidence" value="ECO:0000318"/>
    <property type="project" value="GO_Central"/>
</dbReference>
<dbReference type="GO" id="GO:0030420">
    <property type="term" value="P:establishment of competence for transformation"/>
    <property type="evidence" value="ECO:0007669"/>
    <property type="project" value="UniProtKB-KW"/>
</dbReference>
<dbReference type="GO" id="GO:0043165">
    <property type="term" value="P:Gram-negative-bacterium-type cell outer membrane assembly"/>
    <property type="evidence" value="ECO:0007669"/>
    <property type="project" value="UniProtKB-UniRule"/>
</dbReference>
<dbReference type="GO" id="GO:0051205">
    <property type="term" value="P:protein insertion into membrane"/>
    <property type="evidence" value="ECO:0000318"/>
    <property type="project" value="GO_Central"/>
</dbReference>
<dbReference type="CDD" id="cd15830">
    <property type="entry name" value="BamD"/>
    <property type="match status" value="1"/>
</dbReference>
<dbReference type="Gene3D" id="1.25.40.10">
    <property type="entry name" value="Tetratricopeptide repeat domain"/>
    <property type="match status" value="1"/>
</dbReference>
<dbReference type="HAMAP" id="MF_00922">
    <property type="entry name" value="OM_assembly_BamD"/>
    <property type="match status" value="1"/>
</dbReference>
<dbReference type="InterPro" id="IPR017689">
    <property type="entry name" value="BamD"/>
</dbReference>
<dbReference type="InterPro" id="IPR039565">
    <property type="entry name" value="BamD-like"/>
</dbReference>
<dbReference type="InterPro" id="IPR011990">
    <property type="entry name" value="TPR-like_helical_dom_sf"/>
</dbReference>
<dbReference type="NCBIfam" id="TIGR03302">
    <property type="entry name" value="OM_YfiO"/>
    <property type="match status" value="1"/>
</dbReference>
<dbReference type="PANTHER" id="PTHR37423:SF1">
    <property type="entry name" value="OUTER MEMBRANE PROTEIN ASSEMBLY FACTOR BAMD"/>
    <property type="match status" value="1"/>
</dbReference>
<dbReference type="PANTHER" id="PTHR37423">
    <property type="entry name" value="SOLUBLE LYTIC MUREIN TRANSGLYCOSYLASE-RELATED"/>
    <property type="match status" value="1"/>
</dbReference>
<dbReference type="Pfam" id="PF13525">
    <property type="entry name" value="YfiO"/>
    <property type="match status" value="1"/>
</dbReference>
<dbReference type="SUPFAM" id="SSF48452">
    <property type="entry name" value="TPR-like"/>
    <property type="match status" value="1"/>
</dbReference>
<dbReference type="PROSITE" id="PS51257">
    <property type="entry name" value="PROKAR_LIPOPROTEIN"/>
    <property type="match status" value="1"/>
</dbReference>
<accession>Q9K0B1</accession>
<organism>
    <name type="scientific">Neisseria meningitidis serogroup B (strain ATCC BAA-335 / MC58)</name>
    <dbReference type="NCBI Taxonomy" id="122586"/>
    <lineage>
        <taxon>Bacteria</taxon>
        <taxon>Pseudomonadati</taxon>
        <taxon>Pseudomonadota</taxon>
        <taxon>Betaproteobacteria</taxon>
        <taxon>Neisseriales</taxon>
        <taxon>Neisseriaceae</taxon>
        <taxon>Neisseria</taxon>
    </lineage>
</organism>
<name>BAMD_NEIMB</name>
<feature type="signal peptide" evidence="1">
    <location>
        <begin position="1"/>
        <end position="16"/>
    </location>
</feature>
<feature type="chain" id="PRO_0000036223" description="Outer membrane protein assembly factor BamD">
    <location>
        <begin position="17"/>
        <end position="267"/>
    </location>
</feature>
<feature type="lipid moiety-binding region" description="N-palmitoyl cysteine" evidence="1">
    <location>
        <position position="17"/>
    </location>
</feature>
<feature type="lipid moiety-binding region" description="S-diacylglycerol cysteine" evidence="1">
    <location>
        <position position="17"/>
    </location>
</feature>
<reference key="1">
    <citation type="journal article" date="2000" name="Science">
        <title>Complete genome sequence of Neisseria meningitidis serogroup B strain MC58.</title>
        <authorList>
            <person name="Tettelin H."/>
            <person name="Saunders N.J."/>
            <person name="Heidelberg J.F."/>
            <person name="Jeffries A.C."/>
            <person name="Nelson K.E."/>
            <person name="Eisen J.A."/>
            <person name="Ketchum K.A."/>
            <person name="Hood D.W."/>
            <person name="Peden J.F."/>
            <person name="Dodson R.J."/>
            <person name="Nelson W.C."/>
            <person name="Gwinn M.L."/>
            <person name="DeBoy R.T."/>
            <person name="Peterson J.D."/>
            <person name="Hickey E.K."/>
            <person name="Haft D.H."/>
            <person name="Salzberg S.L."/>
            <person name="White O."/>
            <person name="Fleischmann R.D."/>
            <person name="Dougherty B.A."/>
            <person name="Mason T.M."/>
            <person name="Ciecko A."/>
            <person name="Parksey D.S."/>
            <person name="Blair E."/>
            <person name="Cittone H."/>
            <person name="Clark E.B."/>
            <person name="Cotton M.D."/>
            <person name="Utterback T.R."/>
            <person name="Khouri H.M."/>
            <person name="Qin H."/>
            <person name="Vamathevan J.J."/>
            <person name="Gill J."/>
            <person name="Scarlato V."/>
            <person name="Masignani V."/>
            <person name="Pizza M."/>
            <person name="Grandi G."/>
            <person name="Sun L."/>
            <person name="Smith H.O."/>
            <person name="Fraser C.M."/>
            <person name="Moxon E.R."/>
            <person name="Rappuoli R."/>
            <person name="Venter J.C."/>
        </authorList>
    </citation>
    <scope>NUCLEOTIDE SEQUENCE [LARGE SCALE GENOMIC DNA]</scope>
    <source>
        <strain>ATCC BAA-335 / MC58</strain>
    </source>
</reference>
<reference key="2">
    <citation type="journal article" date="2005" name="Hum. Vaccin.">
        <title>Characterization of the protein content of a meningococcal outer membrane vesicle vaccine by polyacrylamide gel electrophoresis and mass spectrometry.</title>
        <authorList>
            <person name="Vipond C."/>
            <person name="Wheeler J.X."/>
            <person name="Jones C."/>
            <person name="Feavers I.M."/>
            <person name="Suker J."/>
        </authorList>
    </citation>
    <scope>IDENTIFICATION BY MASS SPECTROMETRY [LARGE SCALE ANALYSIS]</scope>
</reference>
<reference key="3">
    <citation type="journal article" date="2006" name="Proteomics">
        <title>Proteomic analysis of a meningococcal outer membrane vesicle vaccine prepared from the group B strain NZ98/254.</title>
        <authorList>
            <person name="Vipond C."/>
            <person name="Suker J."/>
            <person name="Jones C."/>
            <person name="Tang C."/>
            <person name="Feavers I.M."/>
            <person name="Wheeler J.X."/>
        </authorList>
    </citation>
    <scope>IDENTIFICATION BY MASS SPECTROMETRY [LARGE SCALE ANALYSIS]</scope>
    <source>
        <strain>NZ98/254 / Serogroup B</strain>
    </source>
</reference>
<sequence length="267" mass="30915">MKKILLTVSLGLALSACATQGTVDKDAQITQDWSVEKLYAEAQDELNSSNYTRAVKLYEILESRFPTSRHAQQSQLDTAYAYYKDDEKDKALAAIDRFRRLHPQHPNMDYALYLRGLVLFNEDQSFLNKLASQDWSDRDPKANREAYQAFAELVQRFPNSKYAADATARMVKLVDALGGNEMSVARYYMKRGAYIAAANRAQKIIGSYQNTRYVEESLAILELAYKKLDKPRLAADTRRVLETNFPKSPFLKQPWRSDDMPWWRYWH</sequence>
<protein>
    <recommendedName>
        <fullName evidence="1">Outer membrane protein assembly factor BamD</fullName>
    </recommendedName>
    <alternativeName>
        <fullName>Competence lipoprotein ComL</fullName>
    </alternativeName>
</protein>
<gene>
    <name evidence="1" type="primary">bamD</name>
    <name type="synonym">comL</name>
    <name type="ordered locus">NMB0703</name>
</gene>
<keyword id="KW-0998">Cell outer membrane</keyword>
<keyword id="KW-0178">Competence</keyword>
<keyword id="KW-0449">Lipoprotein</keyword>
<keyword id="KW-0472">Membrane</keyword>
<keyword id="KW-0564">Palmitate</keyword>
<keyword id="KW-1185">Reference proteome</keyword>
<keyword id="KW-0732">Signal</keyword>
<evidence type="ECO:0000255" key="1">
    <source>
        <dbReference type="HAMAP-Rule" id="MF_00922"/>
    </source>
</evidence>
<comment type="function">
    <text evidence="1">Part of the outer membrane protein assembly complex, which is involved in assembly and insertion of beta-barrel proteins into the outer membrane. Required for efficient transformation of Neisseria meningitidis by species-related DNA.</text>
</comment>
<comment type="subunit">
    <text evidence="1">Part of the Bam complex.</text>
</comment>
<comment type="subcellular location">
    <subcellularLocation>
        <location evidence="1">Cell outer membrane</location>
        <topology evidence="1">Lipid-anchor</topology>
    </subcellularLocation>
</comment>
<comment type="miscellaneous">
    <text>Present in outer membrane vesicle formulations which are used as vaccines in human.</text>
</comment>
<comment type="similarity">
    <text evidence="1">Belongs to the BamD family.</text>
</comment>